<proteinExistence type="inferred from homology"/>
<comment type="function">
    <text evidence="1">Binds together with bS18 to 16S ribosomal RNA.</text>
</comment>
<comment type="similarity">
    <text evidence="1">Belongs to the bacterial ribosomal protein bS6 family.</text>
</comment>
<sequence length="131" mass="15173">MRHYEIVFMVHPDQSEQVPGMIERYSAAITGAEGKIHRLEDWGRRQLAYPINKLHKAHYVLMNVEAPQEVIDELETTFRFNDAVIRSMVMRTKHAVTEASPMVKAKDERRERRDDFANETADDAEAGDSEE</sequence>
<name>RS6_SALA4</name>
<protein>
    <recommendedName>
        <fullName evidence="1">Small ribosomal subunit protein bS6</fullName>
    </recommendedName>
    <alternativeName>
        <fullName evidence="3">30S ribosomal protein S6</fullName>
    </alternativeName>
</protein>
<accession>B5F3B7</accession>
<reference key="1">
    <citation type="journal article" date="2011" name="J. Bacteriol.">
        <title>Comparative genomics of 28 Salmonella enterica isolates: evidence for CRISPR-mediated adaptive sublineage evolution.</title>
        <authorList>
            <person name="Fricke W.F."/>
            <person name="Mammel M.K."/>
            <person name="McDermott P.F."/>
            <person name="Tartera C."/>
            <person name="White D.G."/>
            <person name="Leclerc J.E."/>
            <person name="Ravel J."/>
            <person name="Cebula T.A."/>
        </authorList>
    </citation>
    <scope>NUCLEOTIDE SEQUENCE [LARGE SCALE GENOMIC DNA]</scope>
    <source>
        <strain>SL483</strain>
    </source>
</reference>
<dbReference type="EMBL" id="CP001138">
    <property type="protein sequence ID" value="ACH52498.1"/>
    <property type="molecule type" value="Genomic_DNA"/>
</dbReference>
<dbReference type="RefSeq" id="WP_001216673.1">
    <property type="nucleotide sequence ID" value="NC_011149.1"/>
</dbReference>
<dbReference type="SMR" id="B5F3B7"/>
<dbReference type="GeneID" id="92804768"/>
<dbReference type="KEGG" id="sea:SeAg_B4669"/>
<dbReference type="HOGENOM" id="CLU_113441_6_1_6"/>
<dbReference type="Proteomes" id="UP000008819">
    <property type="component" value="Chromosome"/>
</dbReference>
<dbReference type="GO" id="GO:0022627">
    <property type="term" value="C:cytosolic small ribosomal subunit"/>
    <property type="evidence" value="ECO:0007669"/>
    <property type="project" value="TreeGrafter"/>
</dbReference>
<dbReference type="GO" id="GO:0070181">
    <property type="term" value="F:small ribosomal subunit rRNA binding"/>
    <property type="evidence" value="ECO:0007669"/>
    <property type="project" value="TreeGrafter"/>
</dbReference>
<dbReference type="GO" id="GO:0003735">
    <property type="term" value="F:structural constituent of ribosome"/>
    <property type="evidence" value="ECO:0007669"/>
    <property type="project" value="InterPro"/>
</dbReference>
<dbReference type="GO" id="GO:0006412">
    <property type="term" value="P:translation"/>
    <property type="evidence" value="ECO:0007669"/>
    <property type="project" value="UniProtKB-UniRule"/>
</dbReference>
<dbReference type="CDD" id="cd00473">
    <property type="entry name" value="bS6"/>
    <property type="match status" value="1"/>
</dbReference>
<dbReference type="FunFam" id="3.30.70.60:FF:000003">
    <property type="entry name" value="30S ribosomal protein S6"/>
    <property type="match status" value="1"/>
</dbReference>
<dbReference type="Gene3D" id="3.30.70.60">
    <property type="match status" value="1"/>
</dbReference>
<dbReference type="HAMAP" id="MF_00360">
    <property type="entry name" value="Ribosomal_bS6"/>
    <property type="match status" value="1"/>
</dbReference>
<dbReference type="InterPro" id="IPR000529">
    <property type="entry name" value="Ribosomal_bS6"/>
</dbReference>
<dbReference type="InterPro" id="IPR020815">
    <property type="entry name" value="Ribosomal_bS6_CS"/>
</dbReference>
<dbReference type="InterPro" id="IPR035980">
    <property type="entry name" value="Ribosomal_bS6_sf"/>
</dbReference>
<dbReference type="InterPro" id="IPR020814">
    <property type="entry name" value="Ribosomal_S6_plastid/chlpt"/>
</dbReference>
<dbReference type="InterPro" id="IPR014717">
    <property type="entry name" value="Transl_elong_EF1B/ribsomal_bS6"/>
</dbReference>
<dbReference type="NCBIfam" id="TIGR00166">
    <property type="entry name" value="S6"/>
    <property type="match status" value="1"/>
</dbReference>
<dbReference type="PANTHER" id="PTHR21011">
    <property type="entry name" value="MITOCHONDRIAL 28S RIBOSOMAL PROTEIN S6"/>
    <property type="match status" value="1"/>
</dbReference>
<dbReference type="PANTHER" id="PTHR21011:SF1">
    <property type="entry name" value="SMALL RIBOSOMAL SUBUNIT PROTEIN BS6M"/>
    <property type="match status" value="1"/>
</dbReference>
<dbReference type="Pfam" id="PF01250">
    <property type="entry name" value="Ribosomal_S6"/>
    <property type="match status" value="1"/>
</dbReference>
<dbReference type="SUPFAM" id="SSF54995">
    <property type="entry name" value="Ribosomal protein S6"/>
    <property type="match status" value="1"/>
</dbReference>
<dbReference type="PROSITE" id="PS01048">
    <property type="entry name" value="RIBOSOMAL_S6"/>
    <property type="match status" value="1"/>
</dbReference>
<feature type="chain" id="PRO_1000120796" description="Small ribosomal subunit protein bS6">
    <location>
        <begin position="1"/>
        <end position="131"/>
    </location>
</feature>
<feature type="region of interest" description="Disordered" evidence="2">
    <location>
        <begin position="98"/>
        <end position="131"/>
    </location>
</feature>
<feature type="compositionally biased region" description="Basic and acidic residues" evidence="2">
    <location>
        <begin position="104"/>
        <end position="116"/>
    </location>
</feature>
<feature type="compositionally biased region" description="Acidic residues" evidence="2">
    <location>
        <begin position="120"/>
        <end position="131"/>
    </location>
</feature>
<organism>
    <name type="scientific">Salmonella agona (strain SL483)</name>
    <dbReference type="NCBI Taxonomy" id="454166"/>
    <lineage>
        <taxon>Bacteria</taxon>
        <taxon>Pseudomonadati</taxon>
        <taxon>Pseudomonadota</taxon>
        <taxon>Gammaproteobacteria</taxon>
        <taxon>Enterobacterales</taxon>
        <taxon>Enterobacteriaceae</taxon>
        <taxon>Salmonella</taxon>
    </lineage>
</organism>
<gene>
    <name evidence="1" type="primary">rpsF</name>
    <name type="ordered locus">SeAg_B4669</name>
</gene>
<evidence type="ECO:0000255" key="1">
    <source>
        <dbReference type="HAMAP-Rule" id="MF_00360"/>
    </source>
</evidence>
<evidence type="ECO:0000256" key="2">
    <source>
        <dbReference type="SAM" id="MobiDB-lite"/>
    </source>
</evidence>
<evidence type="ECO:0000305" key="3"/>
<keyword id="KW-0687">Ribonucleoprotein</keyword>
<keyword id="KW-0689">Ribosomal protein</keyword>
<keyword id="KW-0694">RNA-binding</keyword>
<keyword id="KW-0699">rRNA-binding</keyword>